<gene>
    <name type="primary">prp28</name>
    <name type="ORF">AN1634</name>
</gene>
<proteinExistence type="inferred from homology"/>
<keyword id="KW-0067">ATP-binding</keyword>
<keyword id="KW-0963">Cytoplasm</keyword>
<keyword id="KW-0347">Helicase</keyword>
<keyword id="KW-0378">Hydrolase</keyword>
<keyword id="KW-0507">mRNA processing</keyword>
<keyword id="KW-0508">mRNA splicing</keyword>
<keyword id="KW-0547">Nucleotide-binding</keyword>
<keyword id="KW-0539">Nucleus</keyword>
<keyword id="KW-1185">Reference proteome</keyword>
<dbReference type="EC" id="3.6.4.13"/>
<dbReference type="EMBL" id="AACD01000026">
    <property type="protein sequence ID" value="EAA64754.1"/>
    <property type="status" value="ALT_SEQ"/>
    <property type="molecule type" value="Genomic_DNA"/>
</dbReference>
<dbReference type="EMBL" id="BN001307">
    <property type="protein sequence ID" value="CBF85264.1"/>
    <property type="molecule type" value="Genomic_DNA"/>
</dbReference>
<dbReference type="RefSeq" id="XP_659238.1">
    <property type="nucleotide sequence ID" value="XM_654146.1"/>
</dbReference>
<dbReference type="SMR" id="Q5BCU6"/>
<dbReference type="FunCoup" id="Q5BCU6">
    <property type="interactions" value="887"/>
</dbReference>
<dbReference type="STRING" id="227321.Q5BCU6"/>
<dbReference type="EnsemblFungi" id="CBF85264">
    <property type="protein sequence ID" value="CBF85264"/>
    <property type="gene ID" value="ANIA_01634"/>
</dbReference>
<dbReference type="VEuPathDB" id="FungiDB:AN1634"/>
<dbReference type="eggNOG" id="KOG0333">
    <property type="taxonomic scope" value="Eukaryota"/>
</dbReference>
<dbReference type="HOGENOM" id="CLU_003041_11_3_1"/>
<dbReference type="InParanoid" id="Q5BCU6"/>
<dbReference type="OMA" id="ARDIKHM"/>
<dbReference type="OrthoDB" id="196131at2759"/>
<dbReference type="Proteomes" id="UP000000560">
    <property type="component" value="Chromosome VII"/>
</dbReference>
<dbReference type="GO" id="GO:0071013">
    <property type="term" value="C:catalytic step 2 spliceosome"/>
    <property type="evidence" value="ECO:0000318"/>
    <property type="project" value="GO_Central"/>
</dbReference>
<dbReference type="GO" id="GO:0005737">
    <property type="term" value="C:cytoplasm"/>
    <property type="evidence" value="ECO:0007669"/>
    <property type="project" value="UniProtKB-SubCell"/>
</dbReference>
<dbReference type="GO" id="GO:0005524">
    <property type="term" value="F:ATP binding"/>
    <property type="evidence" value="ECO:0007669"/>
    <property type="project" value="UniProtKB-KW"/>
</dbReference>
<dbReference type="GO" id="GO:0016887">
    <property type="term" value="F:ATP hydrolysis activity"/>
    <property type="evidence" value="ECO:0007669"/>
    <property type="project" value="RHEA"/>
</dbReference>
<dbReference type="GO" id="GO:0003729">
    <property type="term" value="F:mRNA binding"/>
    <property type="evidence" value="ECO:0000318"/>
    <property type="project" value="GO_Central"/>
</dbReference>
<dbReference type="GO" id="GO:0003724">
    <property type="term" value="F:RNA helicase activity"/>
    <property type="evidence" value="ECO:0007669"/>
    <property type="project" value="UniProtKB-EC"/>
</dbReference>
<dbReference type="GO" id="GO:0000398">
    <property type="term" value="P:mRNA splicing, via spliceosome"/>
    <property type="evidence" value="ECO:0000318"/>
    <property type="project" value="GO_Central"/>
</dbReference>
<dbReference type="CDD" id="cd17945">
    <property type="entry name" value="DEADc_DDX23"/>
    <property type="match status" value="1"/>
</dbReference>
<dbReference type="CDD" id="cd18787">
    <property type="entry name" value="SF2_C_DEAD"/>
    <property type="match status" value="1"/>
</dbReference>
<dbReference type="FunFam" id="3.40.50.300:FF:000322">
    <property type="entry name" value="probable ATP-dependent RNA helicase DDX23"/>
    <property type="match status" value="1"/>
</dbReference>
<dbReference type="Gene3D" id="3.40.50.300">
    <property type="entry name" value="P-loop containing nucleotide triphosphate hydrolases"/>
    <property type="match status" value="2"/>
</dbReference>
<dbReference type="InterPro" id="IPR011545">
    <property type="entry name" value="DEAD/DEAH_box_helicase_dom"/>
</dbReference>
<dbReference type="InterPro" id="IPR014001">
    <property type="entry name" value="Helicase_ATP-bd"/>
</dbReference>
<dbReference type="InterPro" id="IPR001650">
    <property type="entry name" value="Helicase_C-like"/>
</dbReference>
<dbReference type="InterPro" id="IPR027417">
    <property type="entry name" value="P-loop_NTPase"/>
</dbReference>
<dbReference type="InterPro" id="IPR000629">
    <property type="entry name" value="RNA-helicase_DEAD-box_CS"/>
</dbReference>
<dbReference type="InterPro" id="IPR014014">
    <property type="entry name" value="RNA_helicase_DEAD_Q_motif"/>
</dbReference>
<dbReference type="PANTHER" id="PTHR47958">
    <property type="entry name" value="ATP-DEPENDENT RNA HELICASE DBP3"/>
    <property type="match status" value="1"/>
</dbReference>
<dbReference type="Pfam" id="PF25430">
    <property type="entry name" value="DDX23"/>
    <property type="match status" value="1"/>
</dbReference>
<dbReference type="Pfam" id="PF00270">
    <property type="entry name" value="DEAD"/>
    <property type="match status" value="1"/>
</dbReference>
<dbReference type="Pfam" id="PF00271">
    <property type="entry name" value="Helicase_C"/>
    <property type="match status" value="1"/>
</dbReference>
<dbReference type="SMART" id="SM00487">
    <property type="entry name" value="DEXDc"/>
    <property type="match status" value="1"/>
</dbReference>
<dbReference type="SMART" id="SM00490">
    <property type="entry name" value="HELICc"/>
    <property type="match status" value="1"/>
</dbReference>
<dbReference type="SUPFAM" id="SSF52540">
    <property type="entry name" value="P-loop containing nucleoside triphosphate hydrolases"/>
    <property type="match status" value="1"/>
</dbReference>
<dbReference type="PROSITE" id="PS00039">
    <property type="entry name" value="DEAD_ATP_HELICASE"/>
    <property type="match status" value="1"/>
</dbReference>
<dbReference type="PROSITE" id="PS51192">
    <property type="entry name" value="HELICASE_ATP_BIND_1"/>
    <property type="match status" value="1"/>
</dbReference>
<dbReference type="PROSITE" id="PS51194">
    <property type="entry name" value="HELICASE_CTER"/>
    <property type="match status" value="1"/>
</dbReference>
<dbReference type="PROSITE" id="PS51195">
    <property type="entry name" value="Q_MOTIF"/>
    <property type="match status" value="1"/>
</dbReference>
<name>PRP28_EMENI</name>
<comment type="function">
    <text evidence="1">ATP-dependent RNA helicase involved in mRNA splicing. May destabilize the U1/5'-splice site duplex to permit an effective competition for the 5'-splice site by the U6 snRNA, resulting in the switch between U1 and U6 at the 5'-splice site. May also act to unwind the U4/U6 base-pairing interaction in the U4/U6/U5 snRNP, facilitating the first covalent step of splicing (By similarity).</text>
</comment>
<comment type="catalytic activity">
    <reaction>
        <text>ATP + H2O = ADP + phosphate + H(+)</text>
        <dbReference type="Rhea" id="RHEA:13065"/>
        <dbReference type="ChEBI" id="CHEBI:15377"/>
        <dbReference type="ChEBI" id="CHEBI:15378"/>
        <dbReference type="ChEBI" id="CHEBI:30616"/>
        <dbReference type="ChEBI" id="CHEBI:43474"/>
        <dbReference type="ChEBI" id="CHEBI:456216"/>
        <dbReference type="EC" id="3.6.4.13"/>
    </reaction>
</comment>
<comment type="subunit">
    <text evidence="1">Component of the U5 snRNP complex.</text>
</comment>
<comment type="subcellular location">
    <subcellularLocation>
        <location evidence="1">Cytoplasm</location>
    </subcellularLocation>
    <subcellularLocation>
        <location evidence="1">Nucleus</location>
    </subcellularLocation>
</comment>
<comment type="domain">
    <text>The Q motif is unique to and characteristic of the DEAD box family of RNA helicases and controls ATP binding and hydrolysis.</text>
</comment>
<comment type="similarity">
    <text evidence="5">Belongs to the DEAD box helicase family. DDX23/PRP28 subfamily.</text>
</comment>
<comment type="sequence caution" evidence="5">
    <conflict type="erroneous gene model prediction">
        <sequence resource="EMBL-CDS" id="EAA64754"/>
    </conflict>
</comment>
<organism>
    <name type="scientific">Emericella nidulans (strain FGSC A4 / ATCC 38163 / CBS 112.46 / NRRL 194 / M139)</name>
    <name type="common">Aspergillus nidulans</name>
    <dbReference type="NCBI Taxonomy" id="227321"/>
    <lineage>
        <taxon>Eukaryota</taxon>
        <taxon>Fungi</taxon>
        <taxon>Dikarya</taxon>
        <taxon>Ascomycota</taxon>
        <taxon>Pezizomycotina</taxon>
        <taxon>Eurotiomycetes</taxon>
        <taxon>Eurotiomycetidae</taxon>
        <taxon>Eurotiales</taxon>
        <taxon>Aspergillaceae</taxon>
        <taxon>Aspergillus</taxon>
        <taxon>Aspergillus subgen. Nidulantes</taxon>
    </lineage>
</organism>
<protein>
    <recommendedName>
        <fullName>Pre-mRNA-splicing ATP-dependent RNA helicase prp28</fullName>
        <ecNumber>3.6.4.13</ecNumber>
    </recommendedName>
</protein>
<evidence type="ECO:0000250" key="1"/>
<evidence type="ECO:0000255" key="2">
    <source>
        <dbReference type="PROSITE-ProRule" id="PRU00541"/>
    </source>
</evidence>
<evidence type="ECO:0000255" key="3">
    <source>
        <dbReference type="PROSITE-ProRule" id="PRU00542"/>
    </source>
</evidence>
<evidence type="ECO:0000256" key="4">
    <source>
        <dbReference type="SAM" id="MobiDB-lite"/>
    </source>
</evidence>
<evidence type="ECO:0000305" key="5"/>
<sequence length="782" mass="86908">MESQSILPPPPPPEDASAPPPPPEESAAPPPPPDVSAPPPPPEDLPPPPPEPEVKKKKVGWGTKRPATTPLSVEELVRKKREADAAAARPKFMSKAERERLALEKRAKEVDAQRRRTNGTPNGVDGMDLDTPSRGFRTPNGDSRSIPTGPRAMRNGDGPTPTGPAAMRSRNDSGTTKSDKKVDKRFNEEDEAAAQAALIKQRYMGADQTSNFSAKKKRKRTTDRKFNFEWNAEEDTSGDYNPLYQHRHEANFFGRGRLAGFGDDVADSVAKKYAKALEDRDREAGSIRAREILEMERRRREESTRNQLDKHWSEKKLEHMRERDWRIFKEDFNIATKGGSVPNPMRSWDESGLPKRLLELVDRVGYKEPTPIQRAAIPIAMQSRDLIGVAVTGSGKTAAFLLPLLCYIAELPRIDEFEWRKNDGPYAIVLAPTRELAQQIEIEAKKFTEPLGFNVVSIVGGHSFEEQAYSLRNGAEIIIATPGRLVDCIERRMLVLSQCCYVIMDEADRMIDLGFEEPVNKILDALPVTNEKPDTEEAEDSSAMSRHLGSKDRYRQTMMYTATMPTAVERIARKYLRRPAIVTIGSAGEAVDTVEQRVEMIAGEDKRKKRLGEILSSGDFRPPIIVFVNIKRNCDAIAREIKQWGFSSVTLHGSKTQEQREAALASVRNGSTDVLVATDLAGRGIDVPDVSLVINFNMATSIESYTHRIGRTGRAGKSGVAITFLGNEDADVMYDLKQMLIKSPISRVPEELRKHEAAQSKPTRGAGKKIEEASGFAGKGGW</sequence>
<accession>Q5BCU6</accession>
<accession>C8VNI0</accession>
<reference key="1">
    <citation type="journal article" date="2005" name="Nature">
        <title>Sequencing of Aspergillus nidulans and comparative analysis with A. fumigatus and A. oryzae.</title>
        <authorList>
            <person name="Galagan J.E."/>
            <person name="Calvo S.E."/>
            <person name="Cuomo C."/>
            <person name="Ma L.-J."/>
            <person name="Wortman J.R."/>
            <person name="Batzoglou S."/>
            <person name="Lee S.-I."/>
            <person name="Bastuerkmen M."/>
            <person name="Spevak C.C."/>
            <person name="Clutterbuck J."/>
            <person name="Kapitonov V."/>
            <person name="Jurka J."/>
            <person name="Scazzocchio C."/>
            <person name="Farman M.L."/>
            <person name="Butler J."/>
            <person name="Purcell S."/>
            <person name="Harris S."/>
            <person name="Braus G.H."/>
            <person name="Draht O."/>
            <person name="Busch S."/>
            <person name="D'Enfert C."/>
            <person name="Bouchier C."/>
            <person name="Goldman G.H."/>
            <person name="Bell-Pedersen D."/>
            <person name="Griffiths-Jones S."/>
            <person name="Doonan J.H."/>
            <person name="Yu J."/>
            <person name="Vienken K."/>
            <person name="Pain A."/>
            <person name="Freitag M."/>
            <person name="Selker E.U."/>
            <person name="Archer D.B."/>
            <person name="Penalva M.A."/>
            <person name="Oakley B.R."/>
            <person name="Momany M."/>
            <person name="Tanaka T."/>
            <person name="Kumagai T."/>
            <person name="Asai K."/>
            <person name="Machida M."/>
            <person name="Nierman W.C."/>
            <person name="Denning D.W."/>
            <person name="Caddick M.X."/>
            <person name="Hynes M."/>
            <person name="Paoletti M."/>
            <person name="Fischer R."/>
            <person name="Miller B.L."/>
            <person name="Dyer P.S."/>
            <person name="Sachs M.S."/>
            <person name="Osmani S.A."/>
            <person name="Birren B.W."/>
        </authorList>
    </citation>
    <scope>NUCLEOTIDE SEQUENCE [LARGE SCALE GENOMIC DNA]</scope>
    <source>
        <strain>FGSC A4 / ATCC 38163 / CBS 112.46 / NRRL 194 / M139</strain>
    </source>
</reference>
<reference key="2">
    <citation type="journal article" date="2009" name="Fungal Genet. Biol.">
        <title>The 2008 update of the Aspergillus nidulans genome annotation: a community effort.</title>
        <authorList>
            <person name="Wortman J.R."/>
            <person name="Gilsenan J.M."/>
            <person name="Joardar V."/>
            <person name="Deegan J."/>
            <person name="Clutterbuck J."/>
            <person name="Andersen M.R."/>
            <person name="Archer D."/>
            <person name="Bencina M."/>
            <person name="Braus G."/>
            <person name="Coutinho P."/>
            <person name="von Dohren H."/>
            <person name="Doonan J."/>
            <person name="Driessen A.J."/>
            <person name="Durek P."/>
            <person name="Espeso E."/>
            <person name="Fekete E."/>
            <person name="Flipphi M."/>
            <person name="Estrada C.G."/>
            <person name="Geysens S."/>
            <person name="Goldman G."/>
            <person name="de Groot P.W."/>
            <person name="Hansen K."/>
            <person name="Harris S.D."/>
            <person name="Heinekamp T."/>
            <person name="Helmstaedt K."/>
            <person name="Henrissat B."/>
            <person name="Hofmann G."/>
            <person name="Homan T."/>
            <person name="Horio T."/>
            <person name="Horiuchi H."/>
            <person name="James S."/>
            <person name="Jones M."/>
            <person name="Karaffa L."/>
            <person name="Karanyi Z."/>
            <person name="Kato M."/>
            <person name="Keller N."/>
            <person name="Kelly D.E."/>
            <person name="Kiel J.A."/>
            <person name="Kim J.M."/>
            <person name="van der Klei I.J."/>
            <person name="Klis F.M."/>
            <person name="Kovalchuk A."/>
            <person name="Krasevec N."/>
            <person name="Kubicek C.P."/>
            <person name="Liu B."/>
            <person name="Maccabe A."/>
            <person name="Meyer V."/>
            <person name="Mirabito P."/>
            <person name="Miskei M."/>
            <person name="Mos M."/>
            <person name="Mullins J."/>
            <person name="Nelson D.R."/>
            <person name="Nielsen J."/>
            <person name="Oakley B.R."/>
            <person name="Osmani S.A."/>
            <person name="Pakula T."/>
            <person name="Paszewski A."/>
            <person name="Paulsen I."/>
            <person name="Pilsyk S."/>
            <person name="Pocsi I."/>
            <person name="Punt P.J."/>
            <person name="Ram A.F."/>
            <person name="Ren Q."/>
            <person name="Robellet X."/>
            <person name="Robson G."/>
            <person name="Seiboth B."/>
            <person name="van Solingen P."/>
            <person name="Specht T."/>
            <person name="Sun J."/>
            <person name="Taheri-Talesh N."/>
            <person name="Takeshita N."/>
            <person name="Ussery D."/>
            <person name="vanKuyk P.A."/>
            <person name="Visser H."/>
            <person name="van de Vondervoort P.J."/>
            <person name="de Vries R.P."/>
            <person name="Walton J."/>
            <person name="Xiang X."/>
            <person name="Xiong Y."/>
            <person name="Zeng A.P."/>
            <person name="Brandt B.W."/>
            <person name="Cornell M.J."/>
            <person name="van den Hondel C.A."/>
            <person name="Visser J."/>
            <person name="Oliver S.G."/>
            <person name="Turner G."/>
        </authorList>
    </citation>
    <scope>GENOME REANNOTATION</scope>
    <source>
        <strain>FGSC A4 / ATCC 38163 / CBS 112.46 / NRRL 194 / M139</strain>
    </source>
</reference>
<feature type="chain" id="PRO_0000282481" description="Pre-mRNA-splicing ATP-dependent RNA helicase prp28">
    <location>
        <begin position="1"/>
        <end position="782"/>
    </location>
</feature>
<feature type="domain" description="Helicase ATP-binding" evidence="2">
    <location>
        <begin position="377"/>
        <end position="582"/>
    </location>
</feature>
<feature type="domain" description="Helicase C-terminal" evidence="3">
    <location>
        <begin position="593"/>
        <end position="756"/>
    </location>
</feature>
<feature type="region of interest" description="Disordered" evidence="4">
    <location>
        <begin position="1"/>
        <end position="192"/>
    </location>
</feature>
<feature type="region of interest" description="Disordered" evidence="4">
    <location>
        <begin position="751"/>
        <end position="782"/>
    </location>
</feature>
<feature type="short sequence motif" description="Q motif">
    <location>
        <begin position="346"/>
        <end position="374"/>
    </location>
</feature>
<feature type="short sequence motif" description="DEAD box">
    <location>
        <begin position="505"/>
        <end position="508"/>
    </location>
</feature>
<feature type="compositionally biased region" description="Pro residues" evidence="4">
    <location>
        <begin position="7"/>
        <end position="51"/>
    </location>
</feature>
<feature type="compositionally biased region" description="Basic and acidic residues" evidence="4">
    <location>
        <begin position="75"/>
        <end position="84"/>
    </location>
</feature>
<feature type="compositionally biased region" description="Basic and acidic residues" evidence="4">
    <location>
        <begin position="94"/>
        <end position="114"/>
    </location>
</feature>
<feature type="compositionally biased region" description="Basic and acidic residues" evidence="4">
    <location>
        <begin position="177"/>
        <end position="187"/>
    </location>
</feature>
<feature type="binding site" evidence="2">
    <location>
        <begin position="390"/>
        <end position="397"/>
    </location>
    <ligand>
        <name>ATP</name>
        <dbReference type="ChEBI" id="CHEBI:30616"/>
    </ligand>
</feature>